<keyword id="KW-0238">DNA-binding</keyword>
<keyword id="KW-0614">Plasmid</keyword>
<keyword id="KW-0678">Repressor</keyword>
<keyword id="KW-0804">Transcription</keyword>
<keyword id="KW-0805">Transcription regulation</keyword>
<evidence type="ECO:0000255" key="1"/>
<dbReference type="EMBL" id="U67194">
    <property type="protein sequence ID" value="AAC64422.1"/>
    <property type="molecule type" value="Genomic_DNA"/>
</dbReference>
<dbReference type="RefSeq" id="WP_010890110.1">
    <property type="nucleotide sequence ID" value="NZ_JBEEEK010000035.1"/>
</dbReference>
<dbReference type="SMR" id="Q57423"/>
<dbReference type="GO" id="GO:0003677">
    <property type="term" value="F:DNA binding"/>
    <property type="evidence" value="ECO:0007669"/>
    <property type="project" value="UniProtKB-KW"/>
</dbReference>
<dbReference type="Gene3D" id="1.10.10.2690">
    <property type="match status" value="1"/>
</dbReference>
<dbReference type="InterPro" id="IPR053721">
    <property type="entry name" value="Fimbrial_Adhesin_Reg"/>
</dbReference>
<dbReference type="InterPro" id="IPR032428">
    <property type="entry name" value="TrfB"/>
</dbReference>
<dbReference type="Pfam" id="PF16509">
    <property type="entry name" value="KORA"/>
    <property type="match status" value="1"/>
</dbReference>
<feature type="chain" id="PRO_0000068379" description="TrfB transcriptional repressor protein">
    <location>
        <begin position="1"/>
        <end position="100"/>
    </location>
</feature>
<feature type="DNA-binding region" description="H-T-H motif" evidence="1">
    <location>
        <begin position="37"/>
        <end position="56"/>
    </location>
</feature>
<gene>
    <name type="primary">trfB</name>
    <name type="synonym">korA</name>
</gene>
<protein>
    <recommendedName>
        <fullName>TrfB transcriptional repressor protein</fullName>
    </recommendedName>
    <alternativeName>
        <fullName>Regulatory protein KorA</fullName>
    </alternativeName>
</protein>
<name>KORA1_ECOLX</name>
<proteinExistence type="predicted"/>
<comment type="function">
    <text>In conjunction with KorB, inhibits the transcription of kilA, trfA and korAB operons. In conjunction with KorC is responsible for the negative control of kilC and kilE operons.</text>
</comment>
<organism>
    <name type="scientific">Escherichia coli</name>
    <dbReference type="NCBI Taxonomy" id="562"/>
    <lineage>
        <taxon>Bacteria</taxon>
        <taxon>Pseudomonadati</taxon>
        <taxon>Pseudomonadota</taxon>
        <taxon>Gammaproteobacteria</taxon>
        <taxon>Enterobacterales</taxon>
        <taxon>Enterobacteriaceae</taxon>
        <taxon>Escherichia</taxon>
    </lineage>
</organism>
<reference key="1">
    <citation type="journal article" date="1995" name="Microbiology">
        <title>Evolution of the korA-oriV segment of promiscuous IncP plasmids.</title>
        <authorList>
            <person name="Thomas C.M."/>
            <person name="Smith C.A."/>
            <person name="Ibbotson J.P."/>
            <person name="Johnston L."/>
            <person name="Wang N."/>
        </authorList>
    </citation>
    <scope>NUCLEOTIDE SEQUENCE [GENOMIC DNA]</scope>
</reference>
<reference key="2">
    <citation type="submission" date="1996-03" db="EMBL/GenBank/DDBJ databases">
        <authorList>
            <person name="Thomas C.M."/>
            <person name="Johnston L."/>
            <person name="Yates C."/>
            <person name="Forster A."/>
        </authorList>
    </citation>
    <scope>NUCLEOTIDE SEQUENCE [GENOMIC DNA]</scope>
</reference>
<geneLocation type="plasmid">
    <name>IncP-beta R751</name>
</geneLocation>
<sequence length="100" mass="10973">MKKRLTEAQFQTAIKGLEIGQQTIDIARGVLVDGRPQAEFVTSLGLTKGAVSQAVSRVWAAAGEQLPEGFERVTAVLPEHQAFIVKKWEADAKRKQEPKS</sequence>
<accession>Q57423</accession>